<evidence type="ECO:0000250" key="1"/>
<evidence type="ECO:0000305" key="2"/>
<protein>
    <recommendedName>
        <fullName evidence="2">Large ribosomal subunit protein uL23cz/uL23cy</fullName>
    </recommendedName>
    <alternativeName>
        <fullName>50S ribosomal protein L23, chloroplastic</fullName>
    </alternativeName>
</protein>
<keyword id="KW-0150">Chloroplast</keyword>
<keyword id="KW-0934">Plastid</keyword>
<keyword id="KW-0687">Ribonucleoprotein</keyword>
<keyword id="KW-0689">Ribosomal protein</keyword>
<keyword id="KW-0694">RNA-binding</keyword>
<keyword id="KW-0699">rRNA-binding</keyword>
<accession>Q8LW11</accession>
<feature type="chain" id="PRO_0000272919" description="Large ribosomal subunit protein uL23cz/uL23cy">
    <location>
        <begin position="1"/>
        <end position="93"/>
    </location>
</feature>
<name>RK23_PHAAN</name>
<reference key="1">
    <citation type="journal article" date="2002" name="DNA Res.">
        <title>Evolutionary re-organisation of a large operon in adzuki bean chloroplast DNA caused by inverted repeat movement.</title>
        <authorList>
            <person name="Perry A.S."/>
            <person name="Brennan S."/>
            <person name="Murphy D.J."/>
            <person name="Kavanagh T.A."/>
            <person name="Wolfe K.H."/>
        </authorList>
    </citation>
    <scope>NUCLEOTIDE SEQUENCE [GENOMIC DNA]</scope>
</reference>
<organism>
    <name type="scientific">Phaseolus angularis</name>
    <name type="common">Azuki bean</name>
    <name type="synonym">Vigna angularis</name>
    <dbReference type="NCBI Taxonomy" id="3914"/>
    <lineage>
        <taxon>Eukaryota</taxon>
        <taxon>Viridiplantae</taxon>
        <taxon>Streptophyta</taxon>
        <taxon>Embryophyta</taxon>
        <taxon>Tracheophyta</taxon>
        <taxon>Spermatophyta</taxon>
        <taxon>Magnoliopsida</taxon>
        <taxon>eudicotyledons</taxon>
        <taxon>Gunneridae</taxon>
        <taxon>Pentapetalae</taxon>
        <taxon>rosids</taxon>
        <taxon>fabids</taxon>
        <taxon>Fabales</taxon>
        <taxon>Fabaceae</taxon>
        <taxon>Papilionoideae</taxon>
        <taxon>50 kb inversion clade</taxon>
        <taxon>NPAAA clade</taxon>
        <taxon>indigoferoid/millettioid clade</taxon>
        <taxon>Phaseoleae</taxon>
        <taxon>Vigna</taxon>
    </lineage>
</organism>
<proteinExistence type="inferred from homology"/>
<sequence length="93" mass="10959">MNGIKYAVFTDKSIRLLGKNQYTFNVESGSTRTEIKHWVELFFDVKVIAMNSHRLPVKGRRVRPIMGHTMHYRRMIITLQPGYSIPPLRKKRT</sequence>
<comment type="function">
    <text evidence="1">Binds to 23S rRNA.</text>
</comment>
<comment type="subunit">
    <text evidence="1">Part of the 50S ribosomal subunit.</text>
</comment>
<comment type="subcellular location">
    <subcellularLocation>
        <location>Plastid</location>
        <location>Chloroplast</location>
    </subcellularLocation>
</comment>
<comment type="similarity">
    <text evidence="2">Belongs to the universal ribosomal protein uL23 family.</text>
</comment>
<dbReference type="EMBL" id="AF536225">
    <property type="protein sequence ID" value="AAN04885.1"/>
    <property type="molecule type" value="Genomic_DNA"/>
</dbReference>
<dbReference type="EMBL" id="AF536226">
    <property type="protein sequence ID" value="AAN04892.1"/>
    <property type="molecule type" value="Genomic_DNA"/>
</dbReference>
<dbReference type="SMR" id="Q8LW11"/>
<dbReference type="EnsemblPlants" id="KOM41389">
    <property type="protein sequence ID" value="KOM41389"/>
    <property type="gene ID" value="LR48_Vigan04g158700"/>
</dbReference>
<dbReference type="Gramene" id="KOM41389">
    <property type="protein sequence ID" value="KOM41389"/>
    <property type="gene ID" value="LR48_Vigan04g158700"/>
</dbReference>
<dbReference type="KEGG" id="var:15382678"/>
<dbReference type="KEGG" id="var:15382717"/>
<dbReference type="OMA" id="VRPIMGH"/>
<dbReference type="OrthoDB" id="1333060at2759"/>
<dbReference type="GO" id="GO:0009507">
    <property type="term" value="C:chloroplast"/>
    <property type="evidence" value="ECO:0007669"/>
    <property type="project" value="UniProtKB-SubCell"/>
</dbReference>
<dbReference type="GO" id="GO:1990904">
    <property type="term" value="C:ribonucleoprotein complex"/>
    <property type="evidence" value="ECO:0007669"/>
    <property type="project" value="UniProtKB-KW"/>
</dbReference>
<dbReference type="GO" id="GO:0005840">
    <property type="term" value="C:ribosome"/>
    <property type="evidence" value="ECO:0007669"/>
    <property type="project" value="UniProtKB-KW"/>
</dbReference>
<dbReference type="GO" id="GO:0003729">
    <property type="term" value="F:mRNA binding"/>
    <property type="evidence" value="ECO:0007669"/>
    <property type="project" value="UniProtKB-ARBA"/>
</dbReference>
<dbReference type="GO" id="GO:0019843">
    <property type="term" value="F:rRNA binding"/>
    <property type="evidence" value="ECO:0007669"/>
    <property type="project" value="UniProtKB-UniRule"/>
</dbReference>
<dbReference type="GO" id="GO:0003735">
    <property type="term" value="F:structural constituent of ribosome"/>
    <property type="evidence" value="ECO:0007669"/>
    <property type="project" value="InterPro"/>
</dbReference>
<dbReference type="GO" id="GO:0006412">
    <property type="term" value="P:translation"/>
    <property type="evidence" value="ECO:0007669"/>
    <property type="project" value="UniProtKB-UniRule"/>
</dbReference>
<dbReference type="FunFam" id="3.30.70.330:FF:000002">
    <property type="entry name" value="50S ribosomal protein L23, chloroplastic"/>
    <property type="match status" value="1"/>
</dbReference>
<dbReference type="Gene3D" id="3.30.70.330">
    <property type="match status" value="1"/>
</dbReference>
<dbReference type="HAMAP" id="MF_01369_B">
    <property type="entry name" value="Ribosomal_uL23_B"/>
    <property type="match status" value="1"/>
</dbReference>
<dbReference type="InterPro" id="IPR012677">
    <property type="entry name" value="Nucleotide-bd_a/b_plait_sf"/>
</dbReference>
<dbReference type="InterPro" id="IPR013025">
    <property type="entry name" value="Ribosomal_uL23-like"/>
</dbReference>
<dbReference type="InterPro" id="IPR012678">
    <property type="entry name" value="Ribosomal_uL23/eL15/eS24_sf"/>
</dbReference>
<dbReference type="InterPro" id="IPR001014">
    <property type="entry name" value="Ribosomal_uL23_CS"/>
</dbReference>
<dbReference type="PANTHER" id="PTHR11620">
    <property type="entry name" value="60S RIBOSOMAL PROTEIN L23A"/>
    <property type="match status" value="1"/>
</dbReference>
<dbReference type="Pfam" id="PF00276">
    <property type="entry name" value="Ribosomal_L23"/>
    <property type="match status" value="1"/>
</dbReference>
<dbReference type="SUPFAM" id="SSF54189">
    <property type="entry name" value="Ribosomal proteins S24e, L23 and L15e"/>
    <property type="match status" value="1"/>
</dbReference>
<dbReference type="PROSITE" id="PS00050">
    <property type="entry name" value="RIBOSOMAL_L23"/>
    <property type="match status" value="1"/>
</dbReference>
<gene>
    <name type="primary">rpl23-A</name>
</gene>
<gene>
    <name type="primary">rpl23-B</name>
</gene>
<geneLocation type="chloroplast"/>